<dbReference type="EC" id="2.5.1.19" evidence="1"/>
<dbReference type="EMBL" id="CP001616">
    <property type="protein sequence ID" value="ACQ92980.1"/>
    <property type="molecule type" value="Genomic_DNA"/>
</dbReference>
<dbReference type="RefSeq" id="WP_012729579.1">
    <property type="nucleotide sequence ID" value="NC_012691.1"/>
</dbReference>
<dbReference type="SMR" id="C4LEG3"/>
<dbReference type="STRING" id="595494.Tola_1365"/>
<dbReference type="KEGG" id="tau:Tola_1365"/>
<dbReference type="eggNOG" id="COG0128">
    <property type="taxonomic scope" value="Bacteria"/>
</dbReference>
<dbReference type="HOGENOM" id="CLU_024321_0_0_6"/>
<dbReference type="OrthoDB" id="9809920at2"/>
<dbReference type="UniPathway" id="UPA00053">
    <property type="reaction ID" value="UER00089"/>
</dbReference>
<dbReference type="Proteomes" id="UP000009073">
    <property type="component" value="Chromosome"/>
</dbReference>
<dbReference type="GO" id="GO:0005737">
    <property type="term" value="C:cytoplasm"/>
    <property type="evidence" value="ECO:0007669"/>
    <property type="project" value="UniProtKB-SubCell"/>
</dbReference>
<dbReference type="GO" id="GO:0003866">
    <property type="term" value="F:3-phosphoshikimate 1-carboxyvinyltransferase activity"/>
    <property type="evidence" value="ECO:0007669"/>
    <property type="project" value="UniProtKB-UniRule"/>
</dbReference>
<dbReference type="GO" id="GO:0008652">
    <property type="term" value="P:amino acid biosynthetic process"/>
    <property type="evidence" value="ECO:0007669"/>
    <property type="project" value="UniProtKB-KW"/>
</dbReference>
<dbReference type="GO" id="GO:0009073">
    <property type="term" value="P:aromatic amino acid family biosynthetic process"/>
    <property type="evidence" value="ECO:0007669"/>
    <property type="project" value="UniProtKB-KW"/>
</dbReference>
<dbReference type="GO" id="GO:0009423">
    <property type="term" value="P:chorismate biosynthetic process"/>
    <property type="evidence" value="ECO:0007669"/>
    <property type="project" value="UniProtKB-UniRule"/>
</dbReference>
<dbReference type="CDD" id="cd01556">
    <property type="entry name" value="EPSP_synthase"/>
    <property type="match status" value="1"/>
</dbReference>
<dbReference type="FunFam" id="3.65.10.10:FF:000003">
    <property type="entry name" value="3-phosphoshikimate 1-carboxyvinyltransferase"/>
    <property type="match status" value="1"/>
</dbReference>
<dbReference type="FunFam" id="3.65.10.10:FF:000004">
    <property type="entry name" value="3-phosphoshikimate 1-carboxyvinyltransferase"/>
    <property type="match status" value="1"/>
</dbReference>
<dbReference type="Gene3D" id="3.65.10.10">
    <property type="entry name" value="Enolpyruvate transferase domain"/>
    <property type="match status" value="2"/>
</dbReference>
<dbReference type="HAMAP" id="MF_00210">
    <property type="entry name" value="EPSP_synth"/>
    <property type="match status" value="1"/>
</dbReference>
<dbReference type="InterPro" id="IPR001986">
    <property type="entry name" value="Enolpyruvate_Tfrase_dom"/>
</dbReference>
<dbReference type="InterPro" id="IPR036968">
    <property type="entry name" value="Enolpyruvate_Tfrase_sf"/>
</dbReference>
<dbReference type="InterPro" id="IPR006264">
    <property type="entry name" value="EPSP_synthase"/>
</dbReference>
<dbReference type="InterPro" id="IPR023193">
    <property type="entry name" value="EPSP_synthase_CS"/>
</dbReference>
<dbReference type="InterPro" id="IPR013792">
    <property type="entry name" value="RNA3'P_cycl/enolpyr_Trfase_a/b"/>
</dbReference>
<dbReference type="NCBIfam" id="TIGR01356">
    <property type="entry name" value="aroA"/>
    <property type="match status" value="1"/>
</dbReference>
<dbReference type="PANTHER" id="PTHR21090">
    <property type="entry name" value="AROM/DEHYDROQUINATE SYNTHASE"/>
    <property type="match status" value="1"/>
</dbReference>
<dbReference type="PANTHER" id="PTHR21090:SF5">
    <property type="entry name" value="PENTAFUNCTIONAL AROM POLYPEPTIDE"/>
    <property type="match status" value="1"/>
</dbReference>
<dbReference type="Pfam" id="PF00275">
    <property type="entry name" value="EPSP_synthase"/>
    <property type="match status" value="1"/>
</dbReference>
<dbReference type="PIRSF" id="PIRSF000505">
    <property type="entry name" value="EPSPS"/>
    <property type="match status" value="1"/>
</dbReference>
<dbReference type="SUPFAM" id="SSF55205">
    <property type="entry name" value="EPT/RTPC-like"/>
    <property type="match status" value="1"/>
</dbReference>
<dbReference type="PROSITE" id="PS00104">
    <property type="entry name" value="EPSP_SYNTHASE_1"/>
    <property type="match status" value="1"/>
</dbReference>
<dbReference type="PROSITE" id="PS00885">
    <property type="entry name" value="EPSP_SYNTHASE_2"/>
    <property type="match status" value="1"/>
</dbReference>
<proteinExistence type="inferred from homology"/>
<accession>C4LEG3</accession>
<name>AROA_TOLAT</name>
<feature type="chain" id="PRO_1000204177" description="3-phosphoshikimate 1-carboxyvinyltransferase">
    <location>
        <begin position="1"/>
        <end position="427"/>
    </location>
</feature>
<feature type="active site" description="Proton acceptor" evidence="1">
    <location>
        <position position="314"/>
    </location>
</feature>
<feature type="binding site" evidence="1">
    <location>
        <position position="22"/>
    </location>
    <ligand>
        <name>3-phosphoshikimate</name>
        <dbReference type="ChEBI" id="CHEBI:145989"/>
    </ligand>
</feature>
<feature type="binding site" evidence="1">
    <location>
        <position position="22"/>
    </location>
    <ligand>
        <name>phosphoenolpyruvate</name>
        <dbReference type="ChEBI" id="CHEBI:58702"/>
    </ligand>
</feature>
<feature type="binding site" evidence="1">
    <location>
        <position position="23"/>
    </location>
    <ligand>
        <name>3-phosphoshikimate</name>
        <dbReference type="ChEBI" id="CHEBI:145989"/>
    </ligand>
</feature>
<feature type="binding site" evidence="1">
    <location>
        <position position="27"/>
    </location>
    <ligand>
        <name>3-phosphoshikimate</name>
        <dbReference type="ChEBI" id="CHEBI:145989"/>
    </ligand>
</feature>
<feature type="binding site" evidence="1">
    <location>
        <position position="96"/>
    </location>
    <ligand>
        <name>phosphoenolpyruvate</name>
        <dbReference type="ChEBI" id="CHEBI:58702"/>
    </ligand>
</feature>
<feature type="binding site" evidence="1">
    <location>
        <position position="124"/>
    </location>
    <ligand>
        <name>phosphoenolpyruvate</name>
        <dbReference type="ChEBI" id="CHEBI:58702"/>
    </ligand>
</feature>
<feature type="binding site" evidence="1">
    <location>
        <position position="170"/>
    </location>
    <ligand>
        <name>3-phosphoshikimate</name>
        <dbReference type="ChEBI" id="CHEBI:145989"/>
    </ligand>
</feature>
<feature type="binding site" evidence="1">
    <location>
        <position position="171"/>
    </location>
    <ligand>
        <name>3-phosphoshikimate</name>
        <dbReference type="ChEBI" id="CHEBI:145989"/>
    </ligand>
</feature>
<feature type="binding site" evidence="1">
    <location>
        <position position="172"/>
    </location>
    <ligand>
        <name>3-phosphoshikimate</name>
        <dbReference type="ChEBI" id="CHEBI:145989"/>
    </ligand>
</feature>
<feature type="binding site" evidence="1">
    <location>
        <position position="172"/>
    </location>
    <ligand>
        <name>phosphoenolpyruvate</name>
        <dbReference type="ChEBI" id="CHEBI:58702"/>
    </ligand>
</feature>
<feature type="binding site" evidence="1">
    <location>
        <position position="198"/>
    </location>
    <ligand>
        <name>3-phosphoshikimate</name>
        <dbReference type="ChEBI" id="CHEBI:145989"/>
    </ligand>
</feature>
<feature type="binding site" evidence="1">
    <location>
        <position position="314"/>
    </location>
    <ligand>
        <name>3-phosphoshikimate</name>
        <dbReference type="ChEBI" id="CHEBI:145989"/>
    </ligand>
</feature>
<feature type="binding site" evidence="1">
    <location>
        <position position="337"/>
    </location>
    <ligand>
        <name>3-phosphoshikimate</name>
        <dbReference type="ChEBI" id="CHEBI:145989"/>
    </ligand>
</feature>
<feature type="binding site" evidence="1">
    <location>
        <position position="341"/>
    </location>
    <ligand>
        <name>3-phosphoshikimate</name>
        <dbReference type="ChEBI" id="CHEBI:145989"/>
    </ligand>
</feature>
<feature type="binding site" evidence="1">
    <location>
        <position position="345"/>
    </location>
    <ligand>
        <name>phosphoenolpyruvate</name>
        <dbReference type="ChEBI" id="CHEBI:58702"/>
    </ligand>
</feature>
<feature type="binding site" evidence="1">
    <location>
        <position position="387"/>
    </location>
    <ligand>
        <name>phosphoenolpyruvate</name>
        <dbReference type="ChEBI" id="CHEBI:58702"/>
    </ligand>
</feature>
<feature type="binding site" evidence="1">
    <location>
        <position position="412"/>
    </location>
    <ligand>
        <name>phosphoenolpyruvate</name>
        <dbReference type="ChEBI" id="CHEBI:58702"/>
    </ligand>
</feature>
<gene>
    <name evidence="1" type="primary">aroA</name>
    <name type="ordered locus">Tola_1365</name>
</gene>
<organism>
    <name type="scientific">Tolumonas auensis (strain DSM 9187 / NBRC 110442 / TA 4)</name>
    <dbReference type="NCBI Taxonomy" id="595494"/>
    <lineage>
        <taxon>Bacteria</taxon>
        <taxon>Pseudomonadati</taxon>
        <taxon>Pseudomonadota</taxon>
        <taxon>Gammaproteobacteria</taxon>
        <taxon>Aeromonadales</taxon>
        <taxon>Aeromonadaceae</taxon>
        <taxon>Tolumonas</taxon>
    </lineage>
</organism>
<protein>
    <recommendedName>
        <fullName evidence="1">3-phosphoshikimate 1-carboxyvinyltransferase</fullName>
        <ecNumber evidence="1">2.5.1.19</ecNumber>
    </recommendedName>
    <alternativeName>
        <fullName evidence="1">5-enolpyruvylshikimate-3-phosphate synthase</fullName>
        <shortName evidence="1">EPSP synthase</shortName>
        <shortName evidence="1">EPSPS</shortName>
    </alternativeName>
</protein>
<evidence type="ECO:0000255" key="1">
    <source>
        <dbReference type="HAMAP-Rule" id="MF_00210"/>
    </source>
</evidence>
<reference key="1">
    <citation type="submission" date="2009-05" db="EMBL/GenBank/DDBJ databases">
        <title>Complete sequence of Tolumonas auensis DSM 9187.</title>
        <authorList>
            <consortium name="US DOE Joint Genome Institute"/>
            <person name="Lucas S."/>
            <person name="Copeland A."/>
            <person name="Lapidus A."/>
            <person name="Glavina del Rio T."/>
            <person name="Tice H."/>
            <person name="Bruce D."/>
            <person name="Goodwin L."/>
            <person name="Pitluck S."/>
            <person name="Chertkov O."/>
            <person name="Brettin T."/>
            <person name="Detter J.C."/>
            <person name="Han C."/>
            <person name="Larimer F."/>
            <person name="Land M."/>
            <person name="Hauser L."/>
            <person name="Kyrpides N."/>
            <person name="Mikhailova N."/>
            <person name="Spring S."/>
            <person name="Beller H."/>
        </authorList>
    </citation>
    <scope>NUCLEOTIDE SEQUENCE [LARGE SCALE GENOMIC DNA]</scope>
    <source>
        <strain>DSM 9187 / NBRC 110442 / TA 4</strain>
    </source>
</reference>
<keyword id="KW-0028">Amino-acid biosynthesis</keyword>
<keyword id="KW-0057">Aromatic amino acid biosynthesis</keyword>
<keyword id="KW-0963">Cytoplasm</keyword>
<keyword id="KW-1185">Reference proteome</keyword>
<keyword id="KW-0808">Transferase</keyword>
<comment type="function">
    <text evidence="1">Catalyzes the transfer of the enolpyruvyl moiety of phosphoenolpyruvate (PEP) to the 5-hydroxyl of shikimate-3-phosphate (S3P) to produce enolpyruvyl shikimate-3-phosphate and inorganic phosphate.</text>
</comment>
<comment type="catalytic activity">
    <reaction evidence="1">
        <text>3-phosphoshikimate + phosphoenolpyruvate = 5-O-(1-carboxyvinyl)-3-phosphoshikimate + phosphate</text>
        <dbReference type="Rhea" id="RHEA:21256"/>
        <dbReference type="ChEBI" id="CHEBI:43474"/>
        <dbReference type="ChEBI" id="CHEBI:57701"/>
        <dbReference type="ChEBI" id="CHEBI:58702"/>
        <dbReference type="ChEBI" id="CHEBI:145989"/>
        <dbReference type="EC" id="2.5.1.19"/>
    </reaction>
    <physiologicalReaction direction="left-to-right" evidence="1">
        <dbReference type="Rhea" id="RHEA:21257"/>
    </physiologicalReaction>
</comment>
<comment type="pathway">
    <text evidence="1">Metabolic intermediate biosynthesis; chorismate biosynthesis; chorismate from D-erythrose 4-phosphate and phosphoenolpyruvate: step 6/7.</text>
</comment>
<comment type="subunit">
    <text evidence="1">Monomer.</text>
</comment>
<comment type="subcellular location">
    <subcellularLocation>
        <location evidence="1">Cytoplasm</location>
    </subcellularLocation>
</comment>
<comment type="similarity">
    <text evidence="1">Belongs to the EPSP synthase family.</text>
</comment>
<sequence length="427" mass="46303">MNTLTLEPIARVEGTVNLPGSKSVSNRALLLAALARGTTRLTNLLDSDDIRHMLNALKTLGVSYELSANKTECTVHGLGRAFSSSEPVNLFLGNAGTAMRPLCAALCLSNGEFTLTGEPRMEERPIAHLVDALRQAGAHVHYLKKDGYPPLTIEGKGLWGGEVVIDGSVSSQFLTAFLMAAPLASGDVRIRIRGELVSKPYIDITLHIMKQFGVTVEHDDYQVFYVRGNQTYVSPGTFLVEGDASSASYFLAAGAIKGKVRVTGIGKNSIQGDIRFADVLEKMGAKITWGDDFIEAENVGELQAVDLDMNQIPDAAMTIATAALFANGKTAIRNIYNWRVKETDRLTAMATELRKVGAEVVEGHDFIEITPPAQLKHAAIDTYNDHRIAMCFSLVALSDTKVTINDPGCTSKTFPDYFTKFASVSQR</sequence>